<evidence type="ECO:0000250" key="1"/>
<evidence type="ECO:0000255" key="2"/>
<evidence type="ECO:0000255" key="3">
    <source>
        <dbReference type="PROSITE-ProRule" id="PRU00297"/>
    </source>
</evidence>
<evidence type="ECO:0000255" key="4">
    <source>
        <dbReference type="PROSITE-ProRule" id="PRU10012"/>
    </source>
</evidence>
<evidence type="ECO:0000269" key="5">
    <source>
    </source>
</evidence>
<evidence type="ECO:0000269" key="6">
    <source>
    </source>
</evidence>
<evidence type="ECO:0000305" key="7"/>
<comment type="function">
    <text evidence="6">Catalyzes the oxidation of Mn(2+) to Mn(3+). The latter, acting as a diffusible redox mediator, is capable of oxidizing a variety of lignin compounds.</text>
</comment>
<comment type="catalytic activity">
    <reaction>
        <text>2 Mn(2+) + H2O2 + 2 H(+) = 2 Mn(3+) + 2 H2O</text>
        <dbReference type="Rhea" id="RHEA:22776"/>
        <dbReference type="ChEBI" id="CHEBI:15377"/>
        <dbReference type="ChEBI" id="CHEBI:15378"/>
        <dbReference type="ChEBI" id="CHEBI:16240"/>
        <dbReference type="ChEBI" id="CHEBI:29035"/>
        <dbReference type="ChEBI" id="CHEBI:29041"/>
        <dbReference type="EC" id="1.11.1.13"/>
    </reaction>
</comment>
<comment type="cofactor">
    <cofactor evidence="3">
        <name>heme b</name>
        <dbReference type="ChEBI" id="CHEBI:60344"/>
    </cofactor>
    <text evidence="3">Binds 1 heme b (iron(II)-protoporphyrin IX) group per subunit.</text>
</comment>
<comment type="cofactor">
    <cofactor evidence="3">
        <name>Ca(2+)</name>
        <dbReference type="ChEBI" id="CHEBI:29108"/>
    </cofactor>
    <text evidence="3">Binds 2 calcium ions per subunit.</text>
</comment>
<comment type="subcellular location">
    <subcellularLocation>
        <location evidence="3 6">Secreted</location>
    </subcellularLocation>
</comment>
<comment type="induction">
    <text evidence="6">During wound-healing and by factors which induce suberization.</text>
</comment>
<comment type="similarity">
    <text evidence="7">Belongs to the peroxidase family. Ligninase subfamily.</text>
</comment>
<protein>
    <recommendedName>
        <fullName>Manganese peroxidase H4</fullName>
        <ecNumber>1.11.1.13</ecNumber>
    </recommendedName>
    <alternativeName>
        <fullName>MP-I</fullName>
    </alternativeName>
    <alternativeName>
        <fullName>Peroxidase manganese-dependent H4</fullName>
    </alternativeName>
</protein>
<reference key="1">
    <citation type="journal article" date="1989" name="J. Biol. Chem.">
        <title>Manganese-dependent peroxidase from Phanerochaete chrysosporium. Primary structure deduced from cDNA sequence.</title>
        <authorList>
            <person name="Pease E.A."/>
            <person name="Andrawis A."/>
            <person name="Tien M."/>
        </authorList>
    </citation>
    <scope>NUCLEOTIDE SEQUENCE [MRNA]</scope>
    <scope>PROTEIN SEQUENCE OF 25-45</scope>
    <scope>FUNCTION</scope>
    <scope>SUBCELLULAR LOCATION</scope>
    <scope>INDUCTION</scope>
    <scope>DISULFIDE BONDS</scope>
    <source>
        <strain>ATCC 24725 / DSM 6909 / CBS 481.73 / BCRC 36200 / NRRL 6361 / VKM F-1767</strain>
    </source>
</reference>
<reference key="2">
    <citation type="journal article" date="1992" name="J. Bacteriol.">
        <title>Heterogeneity and regulation of manganese peroxidases from Phanerochaete chrysosporium.</title>
        <authorList>
            <person name="Pease E.A."/>
            <person name="Tien M."/>
        </authorList>
    </citation>
    <scope>PROTEIN SEQUENCE OF 25-44</scope>
</reference>
<proteinExistence type="evidence at protein level"/>
<feature type="signal peptide" evidence="5 6">
    <location>
        <begin position="1"/>
        <end position="24"/>
    </location>
</feature>
<feature type="chain" id="PRO_0000023780" description="Manganese peroxidase H4">
    <location>
        <begin position="25"/>
        <end position="382"/>
    </location>
</feature>
<feature type="active site" description="Proton acceptor" evidence="3 4">
    <location>
        <position position="70"/>
    </location>
</feature>
<feature type="binding site" evidence="1">
    <location>
        <position position="59"/>
    </location>
    <ligand>
        <name>Mn(2+)</name>
        <dbReference type="ChEBI" id="CHEBI:29035"/>
    </ligand>
</feature>
<feature type="binding site" evidence="1">
    <location>
        <position position="63"/>
    </location>
    <ligand>
        <name>Mn(2+)</name>
        <dbReference type="ChEBI" id="CHEBI:29035"/>
    </ligand>
</feature>
<feature type="binding site" evidence="3">
    <location>
        <position position="71"/>
    </location>
    <ligand>
        <name>Ca(2+)</name>
        <dbReference type="ChEBI" id="CHEBI:29108"/>
        <label>1</label>
    </ligand>
</feature>
<feature type="binding site" evidence="3">
    <location>
        <position position="86"/>
    </location>
    <ligand>
        <name>Ca(2+)</name>
        <dbReference type="ChEBI" id="CHEBI:29108"/>
        <label>1</label>
    </ligand>
</feature>
<feature type="binding site" evidence="3">
    <location>
        <position position="88"/>
    </location>
    <ligand>
        <name>Ca(2+)</name>
        <dbReference type="ChEBI" id="CHEBI:29108"/>
        <label>1</label>
    </ligand>
</feature>
<feature type="binding site" evidence="3">
    <location>
        <position position="90"/>
    </location>
    <ligand>
        <name>Ca(2+)</name>
        <dbReference type="ChEBI" id="CHEBI:29108"/>
        <label>1</label>
    </ligand>
</feature>
<feature type="binding site" description="axial binding residue" evidence="3">
    <location>
        <position position="197"/>
    </location>
    <ligand>
        <name>heme b</name>
        <dbReference type="ChEBI" id="CHEBI:60344"/>
    </ligand>
    <ligandPart>
        <name>Fe</name>
        <dbReference type="ChEBI" id="CHEBI:18248"/>
    </ligandPart>
</feature>
<feature type="binding site" evidence="3">
    <location>
        <position position="198"/>
    </location>
    <ligand>
        <name>Ca(2+)</name>
        <dbReference type="ChEBI" id="CHEBI:29108"/>
        <label>2</label>
    </ligand>
</feature>
<feature type="binding site" evidence="1">
    <location>
        <position position="203"/>
    </location>
    <ligand>
        <name>Mn(2+)</name>
        <dbReference type="ChEBI" id="CHEBI:29035"/>
    </ligand>
</feature>
<feature type="binding site" evidence="3">
    <location>
        <position position="215"/>
    </location>
    <ligand>
        <name>Ca(2+)</name>
        <dbReference type="ChEBI" id="CHEBI:29108"/>
        <label>2</label>
    </ligand>
</feature>
<feature type="binding site" evidence="3">
    <location>
        <position position="217"/>
    </location>
    <ligand>
        <name>Ca(2+)</name>
        <dbReference type="ChEBI" id="CHEBI:29108"/>
        <label>2</label>
    </ligand>
</feature>
<feature type="binding site" evidence="3">
    <location>
        <position position="220"/>
    </location>
    <ligand>
        <name>Ca(2+)</name>
        <dbReference type="ChEBI" id="CHEBI:29108"/>
        <label>2</label>
    </ligand>
</feature>
<feature type="binding site" evidence="3">
    <location>
        <position position="222"/>
    </location>
    <ligand>
        <name>Ca(2+)</name>
        <dbReference type="ChEBI" id="CHEBI:29108"/>
        <label>2</label>
    </ligand>
</feature>
<feature type="site" description="Transition state stabilizer" evidence="3">
    <location>
        <position position="66"/>
    </location>
</feature>
<feature type="glycosylation site" description="N-linked (GlcNAc...) asparagine" evidence="2">
    <location>
        <position position="100"/>
    </location>
</feature>
<feature type="glycosylation site" description="N-linked (GlcNAc...) asparagine" evidence="2">
    <location>
        <position position="155"/>
    </location>
</feature>
<feature type="glycosylation site" description="N-linked (GlcNAc...) asparagine" evidence="2">
    <location>
        <position position="241"/>
    </location>
</feature>
<feature type="disulfide bond" evidence="3 6">
    <location>
        <begin position="27"/>
        <end position="39"/>
    </location>
</feature>
<feature type="disulfide bond" evidence="3 6">
    <location>
        <begin position="38"/>
        <end position="313"/>
    </location>
</feature>
<feature type="disulfide bond" evidence="3 6">
    <location>
        <begin position="57"/>
        <end position="141"/>
    </location>
</feature>
<feature type="disulfide bond" evidence="3 6">
    <location>
        <begin position="277"/>
        <end position="344"/>
    </location>
</feature>
<feature type="disulfide bond" evidence="3 6">
    <location>
        <begin position="366"/>
        <end position="373"/>
    </location>
</feature>
<organism>
    <name type="scientific">Phanerodontia chrysosporium</name>
    <name type="common">White-rot fungus</name>
    <name type="synonym">Sporotrichum pruinosum</name>
    <dbReference type="NCBI Taxonomy" id="2822231"/>
    <lineage>
        <taxon>Eukaryota</taxon>
        <taxon>Fungi</taxon>
        <taxon>Dikarya</taxon>
        <taxon>Basidiomycota</taxon>
        <taxon>Agaricomycotina</taxon>
        <taxon>Agaricomycetes</taxon>
        <taxon>Polyporales</taxon>
        <taxon>Phanerochaetaceae</taxon>
        <taxon>Phanerodontia</taxon>
    </lineage>
</organism>
<dbReference type="EC" id="1.11.1.13"/>
<dbReference type="EMBL" id="J04980">
    <property type="protein sequence ID" value="AAA33746.1"/>
    <property type="molecule type" value="mRNA"/>
</dbReference>
<dbReference type="PIR" id="A32630">
    <property type="entry name" value="A32630"/>
</dbReference>
<dbReference type="SMR" id="P19136"/>
<dbReference type="CAZy" id="AA2">
    <property type="family name" value="Auxiliary Activities 2"/>
</dbReference>
<dbReference type="PeroxiBase" id="2383">
    <property type="entry name" value="PcMnP02_RP78"/>
</dbReference>
<dbReference type="EnsemblFungi" id="AGR57_5338T0">
    <property type="protein sequence ID" value="AGR57_5338T0-p1"/>
    <property type="gene ID" value="AGR57_5338"/>
</dbReference>
<dbReference type="VEuPathDB" id="FungiDB:AGR57_5338"/>
<dbReference type="OMA" id="IACHARA"/>
<dbReference type="SABIO-RK" id="P19136"/>
<dbReference type="GO" id="GO:0005576">
    <property type="term" value="C:extracellular region"/>
    <property type="evidence" value="ECO:0007669"/>
    <property type="project" value="UniProtKB-SubCell"/>
</dbReference>
<dbReference type="GO" id="GO:0020037">
    <property type="term" value="F:heme binding"/>
    <property type="evidence" value="ECO:0007669"/>
    <property type="project" value="InterPro"/>
</dbReference>
<dbReference type="GO" id="GO:0016689">
    <property type="term" value="F:manganese peroxidase activity"/>
    <property type="evidence" value="ECO:0007669"/>
    <property type="project" value="UniProtKB-EC"/>
</dbReference>
<dbReference type="GO" id="GO:0046872">
    <property type="term" value="F:metal ion binding"/>
    <property type="evidence" value="ECO:0007669"/>
    <property type="project" value="UniProtKB-KW"/>
</dbReference>
<dbReference type="GO" id="GO:0034599">
    <property type="term" value="P:cellular response to oxidative stress"/>
    <property type="evidence" value="ECO:0007669"/>
    <property type="project" value="InterPro"/>
</dbReference>
<dbReference type="GO" id="GO:0042744">
    <property type="term" value="P:hydrogen peroxide catabolic process"/>
    <property type="evidence" value="ECO:0007669"/>
    <property type="project" value="UniProtKB-KW"/>
</dbReference>
<dbReference type="GO" id="GO:0046274">
    <property type="term" value="P:lignin catabolic process"/>
    <property type="evidence" value="ECO:0007669"/>
    <property type="project" value="UniProtKB-KW"/>
</dbReference>
<dbReference type="GO" id="GO:0000302">
    <property type="term" value="P:response to reactive oxygen species"/>
    <property type="evidence" value="ECO:0007669"/>
    <property type="project" value="TreeGrafter"/>
</dbReference>
<dbReference type="CDD" id="cd00692">
    <property type="entry name" value="ligninase"/>
    <property type="match status" value="1"/>
</dbReference>
<dbReference type="Gene3D" id="1.10.520.10">
    <property type="match status" value="1"/>
</dbReference>
<dbReference type="Gene3D" id="1.10.420.10">
    <property type="entry name" value="Peroxidase, domain 2"/>
    <property type="match status" value="1"/>
</dbReference>
<dbReference type="InterPro" id="IPR044831">
    <property type="entry name" value="Ccp1-like"/>
</dbReference>
<dbReference type="InterPro" id="IPR002016">
    <property type="entry name" value="Haem_peroxidase"/>
</dbReference>
<dbReference type="InterPro" id="IPR010255">
    <property type="entry name" value="Haem_peroxidase_sf"/>
</dbReference>
<dbReference type="InterPro" id="IPR001621">
    <property type="entry name" value="Ligninase"/>
</dbReference>
<dbReference type="InterPro" id="IPR024589">
    <property type="entry name" value="Ligninase_C"/>
</dbReference>
<dbReference type="InterPro" id="IPR019794">
    <property type="entry name" value="Peroxidases_AS"/>
</dbReference>
<dbReference type="InterPro" id="IPR019793">
    <property type="entry name" value="Peroxidases_heam-ligand_BS"/>
</dbReference>
<dbReference type="PANTHER" id="PTHR31356:SF66">
    <property type="entry name" value="CATALASE-PEROXIDASE"/>
    <property type="match status" value="1"/>
</dbReference>
<dbReference type="PANTHER" id="PTHR31356">
    <property type="entry name" value="THYLAKOID LUMENAL 29 KDA PROTEIN, CHLOROPLASTIC-RELATED"/>
    <property type="match status" value="1"/>
</dbReference>
<dbReference type="Pfam" id="PF00141">
    <property type="entry name" value="peroxidase"/>
    <property type="match status" value="1"/>
</dbReference>
<dbReference type="Pfam" id="PF11895">
    <property type="entry name" value="Peroxidase_ext"/>
    <property type="match status" value="1"/>
</dbReference>
<dbReference type="PRINTS" id="PR00462">
    <property type="entry name" value="LIGNINASE"/>
</dbReference>
<dbReference type="PRINTS" id="PR00458">
    <property type="entry name" value="PEROXIDASE"/>
</dbReference>
<dbReference type="SUPFAM" id="SSF48113">
    <property type="entry name" value="Heme-dependent peroxidases"/>
    <property type="match status" value="1"/>
</dbReference>
<dbReference type="PROSITE" id="PS00435">
    <property type="entry name" value="PEROXIDASE_1"/>
    <property type="match status" value="1"/>
</dbReference>
<dbReference type="PROSITE" id="PS00436">
    <property type="entry name" value="PEROXIDASE_2"/>
    <property type="match status" value="1"/>
</dbReference>
<dbReference type="PROSITE" id="PS50873">
    <property type="entry name" value="PEROXIDASE_4"/>
    <property type="match status" value="1"/>
</dbReference>
<sequence>MAFGSLLAFVALAAITRAAPTAESAVCPDGTRVTNAACCAFIPLAQDLQETLFQGDCGEDAHEVIRLTFHDAIAISQSLGPQAGGGADGSMLHFPTIEPNFSANSGIDDSVNNLLPFMQKHDTISAADLVQFAGAVALSNCPGAPRLEFMAGRPNTTIPAVEGLIPEPQDSVTKILQRFEDAGNFSPFEVVSLLASHTVARADKVDETIDAAPFDSTPFTFDTQVFLEVLLKGTGFPGSNNNTGEVMSPLPLGSGSDTGEMRLQSDFALARDERTACFWQSFVNEQEFMAASFKAAMAKLAILGHSRSSLIDCSDVVPVPKPAVNKPATFPATKGPKDLDTLTCKALKFPTLTSDPGATETLIPHCSNGGMSCPGVQFDGPA</sequence>
<accession>P19136</accession>
<keyword id="KW-0106">Calcium</keyword>
<keyword id="KW-0903">Direct protein sequencing</keyword>
<keyword id="KW-1015">Disulfide bond</keyword>
<keyword id="KW-0325">Glycoprotein</keyword>
<keyword id="KW-0349">Heme</keyword>
<keyword id="KW-0376">Hydrogen peroxide</keyword>
<keyword id="KW-0408">Iron</keyword>
<keyword id="KW-0439">Lignin degradation</keyword>
<keyword id="KW-0464">Manganese</keyword>
<keyword id="KW-0479">Metal-binding</keyword>
<keyword id="KW-0560">Oxidoreductase</keyword>
<keyword id="KW-0575">Peroxidase</keyword>
<keyword id="KW-0964">Secreted</keyword>
<keyword id="KW-0732">Signal</keyword>
<name>PEM4_PHACH</name>